<keyword id="KW-0276">Fatty acid metabolism</keyword>
<keyword id="KW-0436">Ligase</keyword>
<keyword id="KW-0443">Lipid metabolism</keyword>
<keyword id="KW-0596">Phosphopantetheine</keyword>
<keyword id="KW-0597">Phosphoprotein</keyword>
<keyword id="KW-1185">Reference proteome</keyword>
<comment type="function">
    <text evidence="3">Catalyzes the adenylation of p-hydroxybenzoic acid (pHBA) to form p-hydroxybenzoic acid-AMP (pHBA-AMP), which is converted directly to p-hydroxybenzoyl-S-FadD22 (pHBA-S-FAdD22) thioester intermediate in a CoA-independent manner by attack of the phosphopantetheine thiol of FadD22. This intermediate primes the biosynthesis of the phenolphthiocerol (PPOL) by presenting the pHBA starter unit for elongation by Pks15/1. PPOL is an important intermediate in the biosynthesis of phenolic glycolipid (mycosid B).</text>
</comment>
<comment type="catalytic activity">
    <reaction evidence="1">
        <text>holo-[4-hydroxyphenylalkanoate synthase] + 4-hydroxybenzoate + ATP = 4-hydroxyphenyl-[4-hydroxyphenylalkanoate synthase] + AMP + diphosphate</text>
        <dbReference type="Rhea" id="RHEA:54696"/>
        <dbReference type="Rhea" id="RHEA-COMP:12684"/>
        <dbReference type="Rhea" id="RHEA-COMP:13969"/>
        <dbReference type="ChEBI" id="CHEBI:17879"/>
        <dbReference type="ChEBI" id="CHEBI:30616"/>
        <dbReference type="ChEBI" id="CHEBI:33019"/>
        <dbReference type="ChEBI" id="CHEBI:64479"/>
        <dbReference type="ChEBI" id="CHEBI:138321"/>
        <dbReference type="ChEBI" id="CHEBI:456215"/>
        <dbReference type="EC" id="6.2.1.50"/>
    </reaction>
</comment>
<comment type="pathway">
    <text>Lipid metabolism; fatty acid biosynthesis.</text>
</comment>
<comment type="similarity">
    <text evidence="4">Belongs to the ATP-dependent AMP-binding enzyme family.</text>
</comment>
<proteinExistence type="evidence at protein level"/>
<dbReference type="EC" id="6.2.1.50" evidence="1"/>
<dbReference type="EMBL" id="CP000854">
    <property type="protein sequence ID" value="ACC40210.1"/>
    <property type="molecule type" value="Genomic_DNA"/>
</dbReference>
<dbReference type="RefSeq" id="WP_012393569.1">
    <property type="nucleotide sequence ID" value="NC_010612.1"/>
</dbReference>
<dbReference type="SMR" id="B2HIL6"/>
<dbReference type="STRING" id="216594.MMAR_1761"/>
<dbReference type="KEGG" id="mmi:MMAR_1761"/>
<dbReference type="eggNOG" id="COG0236">
    <property type="taxonomic scope" value="Bacteria"/>
</dbReference>
<dbReference type="eggNOG" id="COG0318">
    <property type="taxonomic scope" value="Bacteria"/>
</dbReference>
<dbReference type="HOGENOM" id="CLU_000022_59_10_11"/>
<dbReference type="OrthoDB" id="9803968at2"/>
<dbReference type="BRENDA" id="6.2.1.50">
    <property type="organism ID" value="3506"/>
</dbReference>
<dbReference type="UniPathway" id="UPA00094"/>
<dbReference type="Proteomes" id="UP000001190">
    <property type="component" value="Chromosome"/>
</dbReference>
<dbReference type="GO" id="GO:0016878">
    <property type="term" value="F:acid-thiol ligase activity"/>
    <property type="evidence" value="ECO:0007669"/>
    <property type="project" value="TreeGrafter"/>
</dbReference>
<dbReference type="GO" id="GO:0016874">
    <property type="term" value="F:ligase activity"/>
    <property type="evidence" value="ECO:0000315"/>
    <property type="project" value="UniProtKB"/>
</dbReference>
<dbReference type="GO" id="GO:0031177">
    <property type="term" value="F:phosphopantetheine binding"/>
    <property type="evidence" value="ECO:0007669"/>
    <property type="project" value="InterPro"/>
</dbReference>
<dbReference type="GO" id="GO:0071766">
    <property type="term" value="P:Actinobacterium-type cell wall biogenesis"/>
    <property type="evidence" value="ECO:0000315"/>
    <property type="project" value="UniProtKB"/>
</dbReference>
<dbReference type="GO" id="GO:0006633">
    <property type="term" value="P:fatty acid biosynthetic process"/>
    <property type="evidence" value="ECO:0007669"/>
    <property type="project" value="UniProtKB-UniPathway"/>
</dbReference>
<dbReference type="GO" id="GO:0008610">
    <property type="term" value="P:lipid biosynthetic process"/>
    <property type="evidence" value="ECO:0000315"/>
    <property type="project" value="UniProtKB"/>
</dbReference>
<dbReference type="GO" id="GO:0044550">
    <property type="term" value="P:secondary metabolite biosynthetic process"/>
    <property type="evidence" value="ECO:0007669"/>
    <property type="project" value="TreeGrafter"/>
</dbReference>
<dbReference type="FunFam" id="3.30.300.30:FF:000042">
    <property type="entry name" value="Fatty-acid-CoA ligase FadD22"/>
    <property type="match status" value="1"/>
</dbReference>
<dbReference type="FunFam" id="3.40.50.12780:FF:000055">
    <property type="entry name" value="Fatty-acid-CoA ligase FadD22"/>
    <property type="match status" value="1"/>
</dbReference>
<dbReference type="FunFam" id="1.10.1200.10:FF:000007">
    <property type="entry name" value="Probable polyketide synthase pks17"/>
    <property type="match status" value="1"/>
</dbReference>
<dbReference type="Gene3D" id="3.30.300.30">
    <property type="match status" value="1"/>
</dbReference>
<dbReference type="Gene3D" id="1.10.1200.10">
    <property type="entry name" value="ACP-like"/>
    <property type="match status" value="1"/>
</dbReference>
<dbReference type="Gene3D" id="3.40.50.12780">
    <property type="entry name" value="N-terminal domain of ligase-like"/>
    <property type="match status" value="1"/>
</dbReference>
<dbReference type="InterPro" id="IPR036736">
    <property type="entry name" value="ACP-like_sf"/>
</dbReference>
<dbReference type="InterPro" id="IPR025110">
    <property type="entry name" value="AMP-bd_C"/>
</dbReference>
<dbReference type="InterPro" id="IPR045851">
    <property type="entry name" value="AMP-bd_C_sf"/>
</dbReference>
<dbReference type="InterPro" id="IPR000873">
    <property type="entry name" value="AMP-dep_synth/lig_dom"/>
</dbReference>
<dbReference type="InterPro" id="IPR042099">
    <property type="entry name" value="ANL_N_sf"/>
</dbReference>
<dbReference type="InterPro" id="IPR020806">
    <property type="entry name" value="PKS_PP-bd"/>
</dbReference>
<dbReference type="InterPro" id="IPR009081">
    <property type="entry name" value="PP-bd_ACP"/>
</dbReference>
<dbReference type="NCBIfam" id="NF004716">
    <property type="entry name" value="PRK06060.1"/>
    <property type="match status" value="1"/>
</dbReference>
<dbReference type="PANTHER" id="PTHR43352">
    <property type="entry name" value="ACETYL-COA SYNTHETASE"/>
    <property type="match status" value="1"/>
</dbReference>
<dbReference type="PANTHER" id="PTHR43352:SF1">
    <property type="entry name" value="ANTHRANILATE--COA LIGASE"/>
    <property type="match status" value="1"/>
</dbReference>
<dbReference type="Pfam" id="PF00501">
    <property type="entry name" value="AMP-binding"/>
    <property type="match status" value="1"/>
</dbReference>
<dbReference type="Pfam" id="PF13193">
    <property type="entry name" value="AMP-binding_C"/>
    <property type="match status" value="1"/>
</dbReference>
<dbReference type="Pfam" id="PF00550">
    <property type="entry name" value="PP-binding"/>
    <property type="match status" value="1"/>
</dbReference>
<dbReference type="SMART" id="SM00823">
    <property type="entry name" value="PKS_PP"/>
    <property type="match status" value="1"/>
</dbReference>
<dbReference type="SUPFAM" id="SSF56801">
    <property type="entry name" value="Acetyl-CoA synthetase-like"/>
    <property type="match status" value="1"/>
</dbReference>
<dbReference type="SUPFAM" id="SSF47336">
    <property type="entry name" value="ACP-like"/>
    <property type="match status" value="1"/>
</dbReference>
<dbReference type="PROSITE" id="PS50075">
    <property type="entry name" value="CARRIER"/>
    <property type="match status" value="1"/>
</dbReference>
<sequence length="702" mass="75181">MRNENVAGLLAERASEAGWTDQPAYYAPDVVTHGQIHDGAARLGAVLANRGLCRGDRVLLCMPDSPELVQVLLACLARGILAFLANPELHRDDHAFQERDTQAALVITSGPLCDRFAPSTVVDAADLFSEAARVGPADYEILGGDAAAYATYTSGTTGPPKAAIHRHCDVFAFVEAMCRNALRLTPADIGLSSARMYFAYGLGNSVWFPLATGSSAVVNPLPVGAEVAATLSARFEPSVLYGVPNFFARVVDACSADSFRSVRCVVSAGEALEVGLAERLTEFFGGIPILDGVGSTEVGQTFVSNTVDEWRPGSLGKVLPPYQIRVVAPDGAAAGPGVEGDLWVRGPSIAESYWNWPEPLLTDEGWLDTRDRVCIDDDGWVTYACRADDTEIVGAVNINPREIERLIVEEDAVAEVAVVGVKEATGASTLQAFLVPASAEGIDGSVMRDIHRRLLTRLSAFKVPHRFAVVERLPRTANGKLLRSALRGQTPAKPIWELASAEHRSGAPGQLDDQSASALVSGSREVSLKERLAALQQERHRLVLDAVCGETAKMLGEPDPRSVNRDLAFSELGFDSQMTVELCHRLAAATGLRVPETVGWDYGSISGLAQYLEAELSGADRRVTPQSARSGARALPLIEAQLNKVEELTAAIADGEKPRVAERLRALLGTITEGQEHWGQRIAAASTPDEIFQLIDSEFGES</sequence>
<feature type="chain" id="PRO_0000406352" description="p-hydroxybenzoic acid--AMP ligase FadD22">
    <location>
        <begin position="1"/>
        <end position="702"/>
    </location>
</feature>
<feature type="domain" description="Carrier" evidence="2">
    <location>
        <begin position="538"/>
        <end position="616"/>
    </location>
</feature>
<feature type="modified residue" description="O-(pantetheine 4'-phosphoryl)serine" evidence="2">
    <location>
        <position position="576"/>
    </location>
</feature>
<feature type="mutagenesis site" description="Catalyzes pHBA-AMP formation, indicating this residue is not essential for adenylation activity." evidence="3">
    <original>S</original>
    <variation>A</variation>
    <location>
        <position position="576"/>
    </location>
</feature>
<name>FAA22_MYCMM</name>
<evidence type="ECO:0000250" key="1">
    <source>
        <dbReference type="UniProtKB" id="Q7TXK7"/>
    </source>
</evidence>
<evidence type="ECO:0000255" key="2">
    <source>
        <dbReference type="PROSITE-ProRule" id="PRU00258"/>
    </source>
</evidence>
<evidence type="ECO:0000269" key="3">
    <source>
    </source>
</evidence>
<evidence type="ECO:0000305" key="4"/>
<accession>B2HIL6</accession>
<protein>
    <recommendedName>
        <fullName>p-hydroxybenzoic acid--AMP ligase FadD22</fullName>
        <shortName>p-HB--AMP ligase FadD22</shortName>
        <ecNumber evidence="1">6.2.1.50</ecNumber>
    </recommendedName>
    <alternativeName>
        <fullName>p-hydroxybenzoic acid-AMP synthetase</fullName>
        <shortName>p-HB-AMP synthetase</shortName>
    </alternativeName>
</protein>
<reference key="1">
    <citation type="journal article" date="2008" name="Genome Res.">
        <title>Insights from the complete genome sequence of Mycobacterium marinum on the evolution of Mycobacterium tuberculosis.</title>
        <authorList>
            <person name="Stinear T.P."/>
            <person name="Seemann T."/>
            <person name="Harrison P.F."/>
            <person name="Jenkin G.A."/>
            <person name="Davies J.K."/>
            <person name="Johnson P.D."/>
            <person name="Abdellah Z."/>
            <person name="Arrowsmith C."/>
            <person name="Chillingworth T."/>
            <person name="Churcher C."/>
            <person name="Clarke K."/>
            <person name="Cronin A."/>
            <person name="Davis P."/>
            <person name="Goodhead I."/>
            <person name="Holroyd N."/>
            <person name="Jagels K."/>
            <person name="Lord A."/>
            <person name="Moule S."/>
            <person name="Mungall K."/>
            <person name="Norbertczak H."/>
            <person name="Quail M.A."/>
            <person name="Rabbinowitsch E."/>
            <person name="Walker D."/>
            <person name="White B."/>
            <person name="Whitehead S."/>
            <person name="Small P.L."/>
            <person name="Brosch R."/>
            <person name="Ramakrishnan L."/>
            <person name="Fischbach M.A."/>
            <person name="Parkhill J."/>
            <person name="Cole S.T."/>
        </authorList>
    </citation>
    <scope>NUCLEOTIDE SEQUENCE [LARGE SCALE GENOMIC DNA]</scope>
    <source>
        <strain>ATCC BAA-535 / M</strain>
    </source>
</reference>
<reference key="2">
    <citation type="journal article" date="2008" name="Chem. Biol.">
        <title>Mycobacterial phenolic glycolipid virulence factor biosynthesis: mechanism and small-molecule inhibition of polyketide chain initiation.</title>
        <authorList>
            <person name="Ferreras J.A."/>
            <person name="Stirrett K.L."/>
            <person name="Lu X."/>
            <person name="Ryu J.S."/>
            <person name="Soll C.E."/>
            <person name="Tan D.S."/>
            <person name="Quadri L.E."/>
        </authorList>
    </citation>
    <scope>FUNCTION IN THE BIOSYNTHESIS OF PHENOLPHTHIOCEROL</scope>
    <scope>MUTAGENESIS OF SER-576</scope>
</reference>
<organism>
    <name type="scientific">Mycobacterium marinum (strain ATCC BAA-535 / M)</name>
    <dbReference type="NCBI Taxonomy" id="216594"/>
    <lineage>
        <taxon>Bacteria</taxon>
        <taxon>Bacillati</taxon>
        <taxon>Actinomycetota</taxon>
        <taxon>Actinomycetes</taxon>
        <taxon>Mycobacteriales</taxon>
        <taxon>Mycobacteriaceae</taxon>
        <taxon>Mycobacterium</taxon>
        <taxon>Mycobacterium ulcerans group</taxon>
    </lineage>
</organism>
<gene>
    <name type="primary">fadD22</name>
    <name type="ordered locus">MMAR_1761</name>
</gene>